<accession>P16446</accession>
<proteinExistence type="evidence at protein level"/>
<dbReference type="EMBL" id="M25758">
    <property type="protein sequence ID" value="AAA41984.1"/>
    <property type="molecule type" value="mRNA"/>
</dbReference>
<dbReference type="EMBL" id="BC070945">
    <property type="protein sequence ID" value="AAH70945.1"/>
    <property type="molecule type" value="mRNA"/>
</dbReference>
<dbReference type="PIR" id="A34391">
    <property type="entry name" value="A34391"/>
</dbReference>
<dbReference type="RefSeq" id="NP_058927.1">
    <property type="nucleotide sequence ID" value="NM_017231.1"/>
</dbReference>
<dbReference type="PDB" id="1T27">
    <property type="method" value="X-ray"/>
    <property type="resolution" value="2.20 A"/>
    <property type="chains" value="A=1-271"/>
</dbReference>
<dbReference type="PDBsum" id="1T27"/>
<dbReference type="SMR" id="P16446"/>
<dbReference type="BioGRID" id="248161">
    <property type="interactions" value="1"/>
</dbReference>
<dbReference type="FunCoup" id="P16446">
    <property type="interactions" value="3836"/>
</dbReference>
<dbReference type="STRING" id="10116.ENSRNOP00000005368"/>
<dbReference type="iPTMnet" id="P16446"/>
<dbReference type="PhosphoSitePlus" id="P16446"/>
<dbReference type="SwissPalm" id="P16446"/>
<dbReference type="jPOST" id="P16446"/>
<dbReference type="PaxDb" id="10116-ENSRNOP00000005368"/>
<dbReference type="Ensembl" id="ENSRNOT00000005368.8">
    <property type="protein sequence ID" value="ENSRNOP00000005368.7"/>
    <property type="gene ID" value="ENSRNOG00000003846.8"/>
</dbReference>
<dbReference type="GeneID" id="29525"/>
<dbReference type="KEGG" id="rno:29525"/>
<dbReference type="AGR" id="RGD:61885"/>
<dbReference type="CTD" id="5306"/>
<dbReference type="RGD" id="61885">
    <property type="gene designation" value="Pitpna"/>
</dbReference>
<dbReference type="eggNOG" id="KOG3668">
    <property type="taxonomic scope" value="Eukaryota"/>
</dbReference>
<dbReference type="HOGENOM" id="CLU_046509_0_0_1"/>
<dbReference type="InParanoid" id="P16446"/>
<dbReference type="OMA" id="WDIRVIL"/>
<dbReference type="OrthoDB" id="12186at9989"/>
<dbReference type="PhylomeDB" id="P16446"/>
<dbReference type="TreeFam" id="TF313279"/>
<dbReference type="EvolutionaryTrace" id="P16446"/>
<dbReference type="PRO" id="PR:P16446"/>
<dbReference type="Proteomes" id="UP000002494">
    <property type="component" value="Chromosome 10"/>
</dbReference>
<dbReference type="Bgee" id="ENSRNOG00000003846">
    <property type="expression patterns" value="Expressed in cerebellum and 20 other cell types or tissues"/>
</dbReference>
<dbReference type="ExpressionAtlas" id="P16446">
    <property type="expression patterns" value="baseline and differential"/>
</dbReference>
<dbReference type="GO" id="GO:0005737">
    <property type="term" value="C:cytoplasm"/>
    <property type="evidence" value="ECO:0000250"/>
    <property type="project" value="UniProtKB"/>
</dbReference>
<dbReference type="GO" id="GO:0005634">
    <property type="term" value="C:nucleus"/>
    <property type="evidence" value="ECO:0000250"/>
    <property type="project" value="UniProtKB"/>
</dbReference>
<dbReference type="GO" id="GO:0000062">
    <property type="term" value="F:fatty-acyl-CoA binding"/>
    <property type="evidence" value="ECO:0000314"/>
    <property type="project" value="UniProtKB"/>
</dbReference>
<dbReference type="GO" id="GO:0008289">
    <property type="term" value="F:lipid binding"/>
    <property type="evidence" value="ECO:0000266"/>
    <property type="project" value="RGD"/>
</dbReference>
<dbReference type="GO" id="GO:0031210">
    <property type="term" value="F:phosphatidylcholine binding"/>
    <property type="evidence" value="ECO:0000314"/>
    <property type="project" value="BHF-UCL"/>
</dbReference>
<dbReference type="GO" id="GO:0120019">
    <property type="term" value="F:phosphatidylcholine transfer activity"/>
    <property type="evidence" value="ECO:0000315"/>
    <property type="project" value="UniProtKB"/>
</dbReference>
<dbReference type="GO" id="GO:0008525">
    <property type="term" value="F:phosphatidylcholine transporter activity"/>
    <property type="evidence" value="ECO:0000314"/>
    <property type="project" value="BHF-UCL"/>
</dbReference>
<dbReference type="GO" id="GO:0035091">
    <property type="term" value="F:phosphatidylinositol binding"/>
    <property type="evidence" value="ECO:0000314"/>
    <property type="project" value="UniProtKB"/>
</dbReference>
<dbReference type="GO" id="GO:0008526">
    <property type="term" value="F:phosphatidylinositol transfer activity"/>
    <property type="evidence" value="ECO:0000314"/>
    <property type="project" value="UniProtKB"/>
</dbReference>
<dbReference type="GO" id="GO:0005543">
    <property type="term" value="F:phospholipid binding"/>
    <property type="evidence" value="ECO:0000314"/>
    <property type="project" value="MGI"/>
</dbReference>
<dbReference type="GO" id="GO:0070540">
    <property type="term" value="F:stearic acid binding"/>
    <property type="evidence" value="ECO:0000314"/>
    <property type="project" value="UniProtKB"/>
</dbReference>
<dbReference type="GO" id="GO:0007409">
    <property type="term" value="P:axonogenesis"/>
    <property type="evidence" value="ECO:0000266"/>
    <property type="project" value="RGD"/>
</dbReference>
<dbReference type="GO" id="GO:0015914">
    <property type="term" value="P:phospholipid transport"/>
    <property type="evidence" value="ECO:0000314"/>
    <property type="project" value="UniProtKB"/>
</dbReference>
<dbReference type="CDD" id="cd08888">
    <property type="entry name" value="SRPBCC_PITPNA-B_like"/>
    <property type="match status" value="1"/>
</dbReference>
<dbReference type="FunFam" id="3.30.530.20:FF:000004">
    <property type="entry name" value="Phosphatidylinositol transfer protein alpha isoform"/>
    <property type="match status" value="1"/>
</dbReference>
<dbReference type="Gene3D" id="3.30.530.20">
    <property type="match status" value="1"/>
</dbReference>
<dbReference type="InterPro" id="IPR001666">
    <property type="entry name" value="PI_transfer"/>
</dbReference>
<dbReference type="InterPro" id="IPR055261">
    <property type="entry name" value="PI_transfer_N"/>
</dbReference>
<dbReference type="InterPro" id="IPR023393">
    <property type="entry name" value="START-like_dom_sf"/>
</dbReference>
<dbReference type="PANTHER" id="PTHR10658">
    <property type="entry name" value="PHOSPHATIDYLINOSITOL TRANSFER PROTEIN"/>
    <property type="match status" value="1"/>
</dbReference>
<dbReference type="PANTHER" id="PTHR10658:SF28">
    <property type="entry name" value="PHOSPHATIDYLINOSITOL TRANSFER PROTEIN ALPHA ISOFORM"/>
    <property type="match status" value="1"/>
</dbReference>
<dbReference type="Pfam" id="PF02121">
    <property type="entry name" value="IP_trans"/>
    <property type="match status" value="1"/>
</dbReference>
<dbReference type="PRINTS" id="PR00391">
    <property type="entry name" value="PITRANSFER"/>
</dbReference>
<dbReference type="SUPFAM" id="SSF55961">
    <property type="entry name" value="Bet v1-like"/>
    <property type="match status" value="1"/>
</dbReference>
<gene>
    <name type="primary">Pitpna</name>
    <name type="synonym">Pitpn</name>
</gene>
<keyword id="KW-0002">3D-structure</keyword>
<keyword id="KW-0007">Acetylation</keyword>
<keyword id="KW-0963">Cytoplasm</keyword>
<keyword id="KW-0903">Direct protein sequencing</keyword>
<keyword id="KW-0445">Lipid transport</keyword>
<keyword id="KW-0446">Lipid-binding</keyword>
<keyword id="KW-0539">Nucleus</keyword>
<keyword id="KW-1185">Reference proteome</keyword>
<keyword id="KW-0813">Transport</keyword>
<feature type="initiator methionine" description="Removed" evidence="6">
    <location>
        <position position="1"/>
    </location>
</feature>
<feature type="chain" id="PRO_0000191642" description="Phosphatidylinositol transfer protein alpha isoform">
    <location>
        <begin position="2"/>
        <end position="271"/>
    </location>
</feature>
<feature type="region of interest" description="Disordered" evidence="3">
    <location>
        <begin position="251"/>
        <end position="271"/>
    </location>
</feature>
<feature type="compositionally biased region" description="Basic and acidic residues" evidence="3">
    <location>
        <begin position="251"/>
        <end position="264"/>
    </location>
</feature>
<feature type="binding site" evidence="9">
    <location>
        <position position="59"/>
    </location>
    <ligand>
        <name>a 1,2-diacyl-sn-glycero-3-phospho-(1D-myo-inositol)</name>
        <dbReference type="ChEBI" id="CHEBI:57880"/>
    </ligand>
</feature>
<feature type="binding site" evidence="2">
    <location>
        <position position="61"/>
    </location>
    <ligand>
        <name>a 1,2-diacyl-sn-glycero-3-phospho-(1D-myo-inositol)</name>
        <dbReference type="ChEBI" id="CHEBI:57880"/>
    </ligand>
</feature>
<feature type="binding site" evidence="2">
    <location>
        <position position="86"/>
    </location>
    <ligand>
        <name>a 1,2-diacyl-sn-glycero-3-phospho-(1D-myo-inositol)</name>
        <dbReference type="ChEBI" id="CHEBI:57880"/>
    </ligand>
</feature>
<feature type="binding site" evidence="2">
    <location>
        <position position="90"/>
    </location>
    <ligand>
        <name>a 1,2-diacyl-sn-glycero-3-phospho-(1D-myo-inositol)</name>
        <dbReference type="ChEBI" id="CHEBI:57880"/>
    </ligand>
</feature>
<feature type="binding site" evidence="2">
    <location>
        <position position="97"/>
    </location>
    <ligand>
        <name>a 1,2-diacyl-sn-glycero-3-phospho-(1D-myo-inositol)</name>
        <dbReference type="ChEBI" id="CHEBI:57880"/>
    </ligand>
</feature>
<feature type="binding site" evidence="2">
    <location>
        <position position="195"/>
    </location>
    <ligand>
        <name>a 1,2-diacyl-sn-glycero-3-phospho-(1D-myo-inositol)</name>
        <dbReference type="ChEBI" id="CHEBI:57880"/>
    </ligand>
</feature>
<feature type="modified residue" description="N6-acetyllysine" evidence="2">
    <location>
        <position position="216"/>
    </location>
</feature>
<feature type="mutagenesis site" description="Loss of phosphatidylinositol transfer activity but no significant effect on phosphatidylcholine transfer activity." evidence="7">
    <original>S</original>
    <variation>F</variation>
    <location>
        <position position="25"/>
    </location>
</feature>
<feature type="mutagenesis site" description="Reduced phosphatidylinositol and phosphatidylcholine transfer activity." evidence="7">
    <original>T</original>
    <variation>A</variation>
    <location>
        <position position="59"/>
    </location>
</feature>
<feature type="mutagenesis site" description="Loss of phosphatidylinositol transfer activity but no significant effect on phosphatidylcholine transfer activity." evidence="7">
    <original>T</original>
    <variation>S</variation>
    <variation>Q</variation>
    <variation>V</variation>
    <variation>I</variation>
    <variation>N</variation>
    <variation>D</variation>
    <variation>E</variation>
    <location>
        <position position="59"/>
    </location>
</feature>
<feature type="mutagenesis site" description="No significant effect on phosphatidylinositol and phosphatidylcholine transfer activity." evidence="7">
    <original>H</original>
    <variation>Q</variation>
    <location>
        <position position="60"/>
    </location>
</feature>
<feature type="mutagenesis site" description="Loss of phosphatidylinositol transfer activity but no significant effect on phosphatidylcholine transfer activity." evidence="7">
    <original>P</original>
    <variation>L</variation>
    <location>
        <position position="78"/>
    </location>
</feature>
<feature type="mutagenesis site" description="No significant effect on phosphatidylinositol and phosphatidylcholine transfer activity." evidence="7">
    <original>T</original>
    <variation>I</variation>
    <location>
        <position position="198"/>
    </location>
</feature>
<feature type="mutagenesis site" description="Loss of phosphatidylinositol transfer activity but no significant effect on phosphatidylcholine transfer activity." evidence="7">
    <original>E</original>
    <variation>K</variation>
    <location>
        <position position="248"/>
    </location>
</feature>
<feature type="sequence conflict" description="In Ref. 3; AA sequence." evidence="8" ref="3">
    <original>S</original>
    <variation>H</variation>
    <location>
        <position position="14"/>
    </location>
</feature>
<feature type="strand" evidence="10">
    <location>
        <begin position="3"/>
        <end position="13"/>
    </location>
</feature>
<feature type="helix" evidence="10">
    <location>
        <begin position="15"/>
        <end position="32"/>
    </location>
</feature>
<feature type="strand" evidence="10">
    <location>
        <begin position="38"/>
        <end position="49"/>
    </location>
</feature>
<feature type="strand" evidence="10">
    <location>
        <begin position="55"/>
        <end position="64"/>
    </location>
</feature>
<feature type="turn" evidence="10">
    <location>
        <begin position="66"/>
        <end position="68"/>
    </location>
</feature>
<feature type="helix" evidence="10">
    <location>
        <begin position="71"/>
        <end position="74"/>
    </location>
</feature>
<feature type="turn" evidence="10">
    <location>
        <begin position="79"/>
        <end position="82"/>
    </location>
</feature>
<feature type="strand" evidence="10">
    <location>
        <begin position="84"/>
        <end position="91"/>
    </location>
</feature>
<feature type="strand" evidence="10">
    <location>
        <begin position="94"/>
        <end position="100"/>
    </location>
</feature>
<feature type="turn" evidence="10">
    <location>
        <begin position="102"/>
        <end position="104"/>
    </location>
</feature>
<feature type="helix" evidence="10">
    <location>
        <begin position="105"/>
        <end position="107"/>
    </location>
</feature>
<feature type="strand" evidence="10">
    <location>
        <begin position="108"/>
        <end position="119"/>
    </location>
</feature>
<feature type="turn" evidence="10">
    <location>
        <begin position="124"/>
        <end position="127"/>
    </location>
</feature>
<feature type="helix" evidence="10">
    <location>
        <begin position="133"/>
        <end position="136"/>
    </location>
</feature>
<feature type="strand" evidence="10">
    <location>
        <begin position="138"/>
        <end position="142"/>
    </location>
</feature>
<feature type="helix" evidence="10">
    <location>
        <begin position="147"/>
        <end position="149"/>
    </location>
</feature>
<feature type="turn" evidence="10">
    <location>
        <begin position="152"/>
        <end position="154"/>
    </location>
</feature>
<feature type="helix" evidence="10">
    <location>
        <begin position="157"/>
        <end position="159"/>
    </location>
</feature>
<feature type="turn" evidence="10">
    <location>
        <begin position="161"/>
        <end position="163"/>
    </location>
</feature>
<feature type="turn" evidence="10">
    <location>
        <begin position="167"/>
        <end position="169"/>
    </location>
</feature>
<feature type="helix" evidence="10">
    <location>
        <begin position="178"/>
        <end position="182"/>
    </location>
</feature>
<feature type="strand" evidence="10">
    <location>
        <begin position="186"/>
        <end position="188"/>
    </location>
</feature>
<feature type="strand" evidence="10">
    <location>
        <begin position="191"/>
        <end position="201"/>
    </location>
</feature>
<feature type="turn" evidence="10">
    <location>
        <begin position="204"/>
        <end position="206"/>
    </location>
</feature>
<feature type="helix" evidence="10">
    <location>
        <begin position="207"/>
        <end position="231"/>
    </location>
</feature>
<feature type="helix" evidence="10">
    <location>
        <begin position="233"/>
        <end position="236"/>
    </location>
</feature>
<feature type="helix" evidence="10">
    <location>
        <begin position="241"/>
        <end position="260"/>
    </location>
</feature>
<organism>
    <name type="scientific">Rattus norvegicus</name>
    <name type="common">Rat</name>
    <dbReference type="NCBI Taxonomy" id="10116"/>
    <lineage>
        <taxon>Eukaryota</taxon>
        <taxon>Metazoa</taxon>
        <taxon>Chordata</taxon>
        <taxon>Craniata</taxon>
        <taxon>Vertebrata</taxon>
        <taxon>Euteleostomi</taxon>
        <taxon>Mammalia</taxon>
        <taxon>Eutheria</taxon>
        <taxon>Euarchontoglires</taxon>
        <taxon>Glires</taxon>
        <taxon>Rodentia</taxon>
        <taxon>Myomorpha</taxon>
        <taxon>Muroidea</taxon>
        <taxon>Muridae</taxon>
        <taxon>Murinae</taxon>
        <taxon>Rattus</taxon>
    </lineage>
</organism>
<name>PIPNA_RAT</name>
<comment type="function">
    <text evidence="2 4 7">Catalyzes the transfer of phosphatidylinositol (PI) and phosphatidylcholine (PC) between membranes (PubMed:18636990, PubMed:7568025). Shows a preference for PI and PC containing shorter saturated or monosaturated acyl chains at the sn-1 and sn-2 positions (By similarity). Preference order for PC is C16:1 &gt; C16:0 &gt; C18:1 &gt; C18:0 &gt; C20:4 and for PI is C16:1 &gt; C16:0 &gt; C18:1 &gt; C18:0 &gt; C20:4 &gt; C20:3 (By similarity).</text>
</comment>
<comment type="catalytic activity">
    <reaction evidence="7">
        <text>a 1,2-diacyl-sn-glycero-3-phosphocholine(in) = a 1,2-diacyl-sn-glycero-3-phosphocholine(out)</text>
        <dbReference type="Rhea" id="RHEA:38571"/>
        <dbReference type="ChEBI" id="CHEBI:57643"/>
    </reaction>
    <physiologicalReaction direction="left-to-right" evidence="9">
        <dbReference type="Rhea" id="RHEA:38572"/>
    </physiologicalReaction>
</comment>
<comment type="catalytic activity">
    <reaction evidence="4 7">
        <text>a 1,2-diacyl-sn-glycero-3-phospho-(1D-myo-inositol)(in) = a 1,2-diacyl-sn-glycero-3-phospho-(1D-myo-inositol)(out)</text>
        <dbReference type="Rhea" id="RHEA:38691"/>
        <dbReference type="ChEBI" id="CHEBI:57880"/>
    </reaction>
    <physiologicalReaction direction="left-to-right" evidence="9">
        <dbReference type="Rhea" id="RHEA:38692"/>
    </physiologicalReaction>
</comment>
<comment type="activity regulation">
    <text evidence="4">Phosphatidylinositol transfer activity is inhibited by N-ethylmaleimide.</text>
</comment>
<comment type="subcellular location">
    <subcellularLocation>
        <location evidence="1">Cytoplasm</location>
    </subcellularLocation>
    <subcellularLocation>
        <location evidence="1">Nucleus</location>
    </subcellularLocation>
</comment>
<comment type="tissue specificity">
    <text evidence="5">Expressed in a wide range of tissues.</text>
</comment>
<comment type="PTM">
    <text evidence="1">Phosphorylated by PKC in a calcium and phosphatidylserine-dependent manner.</text>
</comment>
<comment type="similarity">
    <text evidence="8">Belongs to the PtdIns transfer protein family. PI transfer class I subfamily.</text>
</comment>
<evidence type="ECO:0000250" key="1">
    <source>
        <dbReference type="UniProtKB" id="P53810"/>
    </source>
</evidence>
<evidence type="ECO:0000250" key="2">
    <source>
        <dbReference type="UniProtKB" id="Q00169"/>
    </source>
</evidence>
<evidence type="ECO:0000256" key="3">
    <source>
        <dbReference type="SAM" id="MobiDB-lite"/>
    </source>
</evidence>
<evidence type="ECO:0000269" key="4">
    <source>
    </source>
</evidence>
<evidence type="ECO:0000269" key="5">
    <source>
    </source>
</evidence>
<evidence type="ECO:0000269" key="6">
    <source>
    </source>
</evidence>
<evidence type="ECO:0000269" key="7">
    <source>
    </source>
</evidence>
<evidence type="ECO:0000305" key="8"/>
<evidence type="ECO:0000305" key="9">
    <source>
    </source>
</evidence>
<evidence type="ECO:0007829" key="10">
    <source>
        <dbReference type="PDB" id="1T27"/>
    </source>
</evidence>
<protein>
    <recommendedName>
        <fullName>Phosphatidylinositol transfer protein alpha isoform</fullName>
        <shortName>PI-TP-alpha</shortName>
        <shortName>PtdIns transfer protein alpha</shortName>
        <shortName>PtdInsTP alpha</shortName>
    </recommendedName>
</protein>
<sequence>MVLLKEYRVILPVSVDEYQVGQLYSVAEASKNETGGGEGVEVLVNEPYEKDDGEKGQYTHKIYHLQSKVPTFVRMLAPEGALNIHEKAWNAYPYCRTVITNEYMKEDFLIKIETWHKPDLGTQENVHKLEPEAWKHVEAIYIDIADRSQVLSKDYKAEEDPAKFKSIKTGRGPLGPNWKQELVNQKDCPYMCAYKLVTVKFKWWGLQNKVENFIHKQEKRLFTNFHRQLFCWLDKWVDLTMDDIRRMEEETKRQLDEMRQKDPVKGMTADD</sequence>
<reference key="1">
    <citation type="journal article" date="1989" name="J. Biol. Chem.">
        <title>Isolation and sequence of cDNA clones encoding rat phosphatidylinositol transfer protein.</title>
        <authorList>
            <person name="Dickeson S.K."/>
            <person name="Lim C.N."/>
            <person name="Schuyler G.T."/>
            <person name="Dalton T.P."/>
            <person name="Helmkamp G.M. Jr."/>
            <person name="Yarbrough L.R."/>
        </authorList>
    </citation>
    <scope>NUCLEOTIDE SEQUENCE [MRNA]</scope>
    <scope>TISSUE SPECIFICITY</scope>
    <source>
        <tissue>Brain</tissue>
    </source>
</reference>
<reference key="2">
    <citation type="journal article" date="2004" name="Genome Res.">
        <title>The status, quality, and expansion of the NIH full-length cDNA project: the Mammalian Gene Collection (MGC).</title>
        <authorList>
            <consortium name="The MGC Project Team"/>
        </authorList>
    </citation>
    <scope>NUCLEOTIDE SEQUENCE [LARGE SCALE MRNA]</scope>
    <source>
        <tissue>Heart</tissue>
    </source>
</reference>
<reference key="3">
    <citation type="journal article" date="1987" name="Biochem. Biophys. Res. Commun.">
        <title>Amino-terminal sequence of a phospholipid transfer protein from rat lung.</title>
        <authorList>
            <person name="Funkhouser J.D."/>
        </authorList>
    </citation>
    <scope>PROTEIN SEQUENCE OF 2-21</scope>
    <source>
        <tissue>Lung</tissue>
    </source>
</reference>
<reference key="4">
    <citation type="submission" date="2006-12" db="UniProtKB">
        <authorList>
            <person name="Lubec G."/>
            <person name="Afjehi-Sadat L."/>
            <person name="Shim K."/>
        </authorList>
    </citation>
    <scope>PROTEIN SEQUENCE OF 9-31; 88-96; 136-147 AND 235-244</scope>
    <scope>IDENTIFICATION BY MASS SPECTROMETRY</scope>
    <source>
        <strain>Sprague-Dawley</strain>
        <tissue>Spinal cord</tissue>
    </source>
</reference>
<reference key="5">
    <citation type="journal article" date="1995" name="Proc. Natl. Acad. Sci. U.S.A.">
        <title>Mutant rat phosphatidylinositol/phosphatidylcholine transfer proteins specifically defective in phosphatidylinositol transfer: implications for the regulation of phospholipid transfer activity.</title>
        <authorList>
            <person name="Alb J.G. Jr."/>
            <person name="Gedvilaite A."/>
            <person name="Cartee R.T."/>
            <person name="Skinner H.B."/>
            <person name="Bankaitis V.A."/>
        </authorList>
    </citation>
    <scope>FUNCTION</scope>
    <scope>CATALYTIC ACTIVITY</scope>
    <scope>MUTAGENESIS OF SER-25; THR-59; HIS-60; PRO-78; THR-198 AND GLU-248</scope>
</reference>
<reference key="6">
    <citation type="journal article" date="2008" name="Traffic">
        <title>Dynamics of lipid transfer by phosphatidylinositol transfer proteins in cells.</title>
        <authorList>
            <person name="Shadan S."/>
            <person name="Holic R."/>
            <person name="Carvou N."/>
            <person name="Ee P."/>
            <person name="Li M."/>
            <person name="Murray-Rust J."/>
            <person name="Cockcroft S."/>
        </authorList>
    </citation>
    <scope>FUNCTION</scope>
    <scope>CATALYTIC ACTIVITY</scope>
    <scope>ACTIVITY REGULATION</scope>
</reference>
<reference key="7">
    <citation type="journal article" date="2001" name="J. Biol. Chem.">
        <title>Structure of a multifunctional protein. Mammalian phosphatidylinositol transfer protein complexed with phosphatidylcholine.</title>
        <authorList>
            <person name="Yoder M.D."/>
            <person name="Thomas L.M."/>
            <person name="Tremblay J.M."/>
            <person name="Oliver R.L."/>
            <person name="Yarbrough L.R."/>
            <person name="Helmkamp G.M. Jr."/>
        </authorList>
    </citation>
    <scope>X-RAY CRYSTALLOGRAPHY (2.2 ANGSTROMS)</scope>
</reference>